<evidence type="ECO:0000255" key="1">
    <source>
        <dbReference type="HAMAP-Rule" id="MF_00549"/>
    </source>
</evidence>
<name>MGSA_HISS1</name>
<protein>
    <recommendedName>
        <fullName evidence="1">Methylglyoxal synthase</fullName>
        <shortName evidence="1">MGS</shortName>
        <ecNumber evidence="1">4.2.3.3</ecNumber>
    </recommendedName>
</protein>
<accession>Q0I4N3</accession>
<sequence length="152" mass="17225">MQTTYRKLTKNKKIALVAHDHCKQDLIQWCQTNRTLLQPHILYATGTTGNLIHQETNLEIKNLLSGPMGGDQQLGGLIAEGKIDLLIFFWDPMNAVPHDPDVKALMRIATVWNIPVAMNIATADFLISSPAFQQETEIRIPDYQGYLKERLK</sequence>
<keyword id="KW-0456">Lyase</keyword>
<comment type="function">
    <text evidence="1">Catalyzes the formation of methylglyoxal from dihydroxyacetone phosphate.</text>
</comment>
<comment type="catalytic activity">
    <reaction evidence="1">
        <text>dihydroxyacetone phosphate = methylglyoxal + phosphate</text>
        <dbReference type="Rhea" id="RHEA:17937"/>
        <dbReference type="ChEBI" id="CHEBI:17158"/>
        <dbReference type="ChEBI" id="CHEBI:43474"/>
        <dbReference type="ChEBI" id="CHEBI:57642"/>
        <dbReference type="EC" id="4.2.3.3"/>
    </reaction>
</comment>
<comment type="similarity">
    <text evidence="1">Belongs to the methylglyoxal synthase family.</text>
</comment>
<organism>
    <name type="scientific">Histophilus somni (strain 129Pt)</name>
    <name type="common">Haemophilus somnus</name>
    <dbReference type="NCBI Taxonomy" id="205914"/>
    <lineage>
        <taxon>Bacteria</taxon>
        <taxon>Pseudomonadati</taxon>
        <taxon>Pseudomonadota</taxon>
        <taxon>Gammaproteobacteria</taxon>
        <taxon>Pasteurellales</taxon>
        <taxon>Pasteurellaceae</taxon>
        <taxon>Histophilus</taxon>
    </lineage>
</organism>
<dbReference type="EC" id="4.2.3.3" evidence="1"/>
<dbReference type="EMBL" id="CP000436">
    <property type="protein sequence ID" value="ABI25625.1"/>
    <property type="molecule type" value="Genomic_DNA"/>
</dbReference>
<dbReference type="SMR" id="Q0I4N3"/>
<dbReference type="KEGG" id="hso:HS_1350"/>
<dbReference type="eggNOG" id="COG1803">
    <property type="taxonomic scope" value="Bacteria"/>
</dbReference>
<dbReference type="HOGENOM" id="CLU_120420_0_1_6"/>
<dbReference type="GO" id="GO:0005829">
    <property type="term" value="C:cytosol"/>
    <property type="evidence" value="ECO:0007669"/>
    <property type="project" value="TreeGrafter"/>
</dbReference>
<dbReference type="GO" id="GO:0008929">
    <property type="term" value="F:methylglyoxal synthase activity"/>
    <property type="evidence" value="ECO:0007669"/>
    <property type="project" value="UniProtKB-UniRule"/>
</dbReference>
<dbReference type="GO" id="GO:0019242">
    <property type="term" value="P:methylglyoxal biosynthetic process"/>
    <property type="evidence" value="ECO:0007669"/>
    <property type="project" value="UniProtKB-UniRule"/>
</dbReference>
<dbReference type="CDD" id="cd01422">
    <property type="entry name" value="MGS"/>
    <property type="match status" value="1"/>
</dbReference>
<dbReference type="FunFam" id="3.40.50.1380:FF:000002">
    <property type="entry name" value="Methylglyoxal synthase"/>
    <property type="match status" value="1"/>
</dbReference>
<dbReference type="Gene3D" id="3.40.50.1380">
    <property type="entry name" value="Methylglyoxal synthase-like domain"/>
    <property type="match status" value="1"/>
</dbReference>
<dbReference type="HAMAP" id="MF_00549">
    <property type="entry name" value="Methylglyoxal_synth"/>
    <property type="match status" value="1"/>
</dbReference>
<dbReference type="InterPro" id="IPR004363">
    <property type="entry name" value="Methylgl_synth"/>
</dbReference>
<dbReference type="InterPro" id="IPR018148">
    <property type="entry name" value="Methylglyoxal_synth_AS"/>
</dbReference>
<dbReference type="InterPro" id="IPR011607">
    <property type="entry name" value="MGS-like_dom"/>
</dbReference>
<dbReference type="InterPro" id="IPR036914">
    <property type="entry name" value="MGS-like_dom_sf"/>
</dbReference>
<dbReference type="NCBIfam" id="TIGR00160">
    <property type="entry name" value="MGSA"/>
    <property type="match status" value="1"/>
</dbReference>
<dbReference type="NCBIfam" id="NF003559">
    <property type="entry name" value="PRK05234.1"/>
    <property type="match status" value="1"/>
</dbReference>
<dbReference type="PANTHER" id="PTHR30492">
    <property type="entry name" value="METHYLGLYOXAL SYNTHASE"/>
    <property type="match status" value="1"/>
</dbReference>
<dbReference type="PANTHER" id="PTHR30492:SF0">
    <property type="entry name" value="METHYLGLYOXAL SYNTHASE"/>
    <property type="match status" value="1"/>
</dbReference>
<dbReference type="Pfam" id="PF02142">
    <property type="entry name" value="MGS"/>
    <property type="match status" value="1"/>
</dbReference>
<dbReference type="PIRSF" id="PIRSF006614">
    <property type="entry name" value="Methylglyox_syn"/>
    <property type="match status" value="1"/>
</dbReference>
<dbReference type="SMART" id="SM00851">
    <property type="entry name" value="MGS"/>
    <property type="match status" value="1"/>
</dbReference>
<dbReference type="SUPFAM" id="SSF52335">
    <property type="entry name" value="Methylglyoxal synthase-like"/>
    <property type="match status" value="1"/>
</dbReference>
<dbReference type="PROSITE" id="PS01335">
    <property type="entry name" value="METHYLGLYOXAL_SYNTH"/>
    <property type="match status" value="1"/>
</dbReference>
<dbReference type="PROSITE" id="PS51855">
    <property type="entry name" value="MGS"/>
    <property type="match status" value="1"/>
</dbReference>
<reference key="1">
    <citation type="journal article" date="2007" name="J. Bacteriol.">
        <title>Complete genome sequence of Haemophilus somnus (Histophilus somni) strain 129Pt and comparison to Haemophilus ducreyi 35000HP and Haemophilus influenzae Rd.</title>
        <authorList>
            <person name="Challacombe J.F."/>
            <person name="Duncan A.J."/>
            <person name="Brettin T.S."/>
            <person name="Bruce D."/>
            <person name="Chertkov O."/>
            <person name="Detter J.C."/>
            <person name="Han C.S."/>
            <person name="Misra M."/>
            <person name="Richardson P."/>
            <person name="Tapia R."/>
            <person name="Thayer N."/>
            <person name="Xie G."/>
            <person name="Inzana T.J."/>
        </authorList>
    </citation>
    <scope>NUCLEOTIDE SEQUENCE [LARGE SCALE GENOMIC DNA]</scope>
    <source>
        <strain>129Pt</strain>
    </source>
</reference>
<gene>
    <name evidence="1" type="primary">mgsA</name>
    <name type="ordered locus">HS_1350</name>
</gene>
<proteinExistence type="inferred from homology"/>
<feature type="chain" id="PRO_1000017813" description="Methylglyoxal synthase">
    <location>
        <begin position="1"/>
        <end position="152"/>
    </location>
</feature>
<feature type="domain" description="MGS-like" evidence="1">
    <location>
        <begin position="6"/>
        <end position="152"/>
    </location>
</feature>
<feature type="active site" description="Proton donor/acceptor" evidence="1">
    <location>
        <position position="71"/>
    </location>
</feature>
<feature type="binding site" evidence="1">
    <location>
        <position position="19"/>
    </location>
    <ligand>
        <name>substrate</name>
    </ligand>
</feature>
<feature type="binding site" evidence="1">
    <location>
        <position position="23"/>
    </location>
    <ligand>
        <name>substrate</name>
    </ligand>
</feature>
<feature type="binding site" evidence="1">
    <location>
        <begin position="45"/>
        <end position="48"/>
    </location>
    <ligand>
        <name>substrate</name>
    </ligand>
</feature>
<feature type="binding site" evidence="1">
    <location>
        <begin position="65"/>
        <end position="66"/>
    </location>
    <ligand>
        <name>substrate</name>
    </ligand>
</feature>
<feature type="binding site" evidence="1">
    <location>
        <position position="98"/>
    </location>
    <ligand>
        <name>substrate</name>
    </ligand>
</feature>